<organism>
    <name type="scientific">Lobatophasma redelinghuysense</name>
    <name type="common">Gladiator</name>
    <name type="synonym">Heel-walker</name>
    <dbReference type="NCBI Taxonomy" id="253128"/>
    <lineage>
        <taxon>Eukaryota</taxon>
        <taxon>Metazoa</taxon>
        <taxon>Ecdysozoa</taxon>
        <taxon>Arthropoda</taxon>
        <taxon>Hexapoda</taxon>
        <taxon>Insecta</taxon>
        <taxon>Pterygota</taxon>
        <taxon>Neoptera</taxon>
        <taxon>Polyneoptera</taxon>
        <taxon>Mantophasmatodea</taxon>
        <taxon>Austrophasmatidae</taxon>
        <taxon>Lobatophasma</taxon>
    </lineage>
</organism>
<dbReference type="GO" id="GO:0005576">
    <property type="term" value="C:extracellular region"/>
    <property type="evidence" value="ECO:0007669"/>
    <property type="project" value="UniProtKB-SubCell"/>
</dbReference>
<dbReference type="GO" id="GO:0007218">
    <property type="term" value="P:neuropeptide signaling pathway"/>
    <property type="evidence" value="ECO:0007669"/>
    <property type="project" value="UniProtKB-KW"/>
</dbReference>
<proteinExistence type="evidence at protein level"/>
<protein>
    <recommendedName>
        <fullName evidence="4">Myosuppressin</fullName>
        <shortName evidence="4">MS</shortName>
    </recommendedName>
</protein>
<keyword id="KW-0027">Amidation</keyword>
<keyword id="KW-0903">Direct protein sequencing</keyword>
<keyword id="KW-0527">Neuropeptide</keyword>
<keyword id="KW-0873">Pyrrolidone carboxylic acid</keyword>
<keyword id="KW-0964">Secreted</keyword>
<reference evidence="5" key="1">
    <citation type="journal article" date="2012" name="Syst. Biol.">
        <title>Peptidomics-based phylogeny and biogeography of Mantophasmatodea (Hexapoda).</title>
        <authorList>
            <person name="Predel R."/>
            <person name="Neupert S."/>
            <person name="Huetteroth W."/>
            <person name="Kahnt J."/>
            <person name="Waidelich D."/>
            <person name="Roth S."/>
        </authorList>
    </citation>
    <scope>PROTEIN SEQUENCE</scope>
    <scope>PYROGLUTAMATE FORMATION AT GLN-1</scope>
    <scope>AMIDATION AT PHE-10</scope>
    <source>
        <tissue evidence="3">Corpora cardiaca</tissue>
    </source>
</reference>
<accession>B3A095</accession>
<comment type="function">
    <text evidence="1">Myoinhibiting neuropeptide.</text>
</comment>
<comment type="subcellular location">
    <subcellularLocation>
        <location evidence="6">Secreted</location>
    </subcellularLocation>
</comment>
<comment type="similarity">
    <text evidence="2">Belongs to the myosuppressin family.</text>
</comment>
<sequence>QDVDHVFLRF</sequence>
<evidence type="ECO:0000250" key="1">
    <source>
        <dbReference type="UniProtKB" id="P61849"/>
    </source>
</evidence>
<evidence type="ECO:0000255" key="2"/>
<evidence type="ECO:0000269" key="3">
    <source>
    </source>
</evidence>
<evidence type="ECO:0000303" key="4">
    <source>
    </source>
</evidence>
<evidence type="ECO:0000305" key="5"/>
<evidence type="ECO:0000305" key="6">
    <source>
    </source>
</evidence>
<name>NEMS_LOBRE</name>
<feature type="peptide" id="PRO_0000421715" description="Myosuppressin" evidence="3">
    <location>
        <begin position="1"/>
        <end position="10"/>
    </location>
</feature>
<feature type="modified residue" description="Pyrrolidone carboxylic acid" evidence="3">
    <location>
        <position position="1"/>
    </location>
</feature>
<feature type="modified residue" description="Phenylalanine amide" evidence="3">
    <location>
        <position position="10"/>
    </location>
</feature>